<organism>
    <name type="scientific">Halorubrum vacuolatum</name>
    <name type="common">Natronobacterium vacuolatum</name>
    <dbReference type="NCBI Taxonomy" id="63740"/>
    <lineage>
        <taxon>Archaea</taxon>
        <taxon>Methanobacteriati</taxon>
        <taxon>Methanobacteriota</taxon>
        <taxon>Stenosarchaea group</taxon>
        <taxon>Halobacteria</taxon>
        <taxon>Halobacteriales</taxon>
        <taxon>Haloferacaceae</taxon>
        <taxon>Halorubrum</taxon>
    </lineage>
</organism>
<sequence length="78" mass="8224">MAQPDSSSLAEVLDRVLDKGVVVDVYARLSLVGIEILTVEARVVAASVDTFLHYAEEIAKIEQAELTAGAEAAPTPEA</sequence>
<feature type="initiator methionine" description="Removed" evidence="2">
    <location>
        <position position="1"/>
    </location>
</feature>
<feature type="chain" id="PRO_0000199995" description="Gas vesicle protein A">
    <location>
        <begin position="2"/>
        <end position="78"/>
    </location>
</feature>
<keyword id="KW-0903">Direct protein sequencing</keyword>
<keyword id="KW-0304">Gas vesicle</keyword>
<dbReference type="EMBL" id="Y08571">
    <property type="protein sequence ID" value="CAA69881.1"/>
    <property type="molecule type" value="Genomic_DNA"/>
</dbReference>
<dbReference type="PIR" id="T44966">
    <property type="entry name" value="T44966"/>
</dbReference>
<dbReference type="RefSeq" id="WP_089386074.1">
    <property type="nucleotide sequence ID" value="NZ_FZNQ01000042.1"/>
</dbReference>
<dbReference type="SMR" id="O33397"/>
<dbReference type="OrthoDB" id="187177at2157"/>
<dbReference type="GO" id="GO:0033172">
    <property type="term" value="C:gas vesicle shell"/>
    <property type="evidence" value="ECO:0007669"/>
    <property type="project" value="UniProtKB-UniRule"/>
</dbReference>
<dbReference type="GO" id="GO:0012506">
    <property type="term" value="C:vesicle membrane"/>
    <property type="evidence" value="ECO:0007669"/>
    <property type="project" value="InterPro"/>
</dbReference>
<dbReference type="GO" id="GO:0005198">
    <property type="term" value="F:structural molecule activity"/>
    <property type="evidence" value="ECO:0007669"/>
    <property type="project" value="InterPro"/>
</dbReference>
<dbReference type="HAMAP" id="MF_00576">
    <property type="entry name" value="Gas_vesicle_A"/>
    <property type="match status" value="1"/>
</dbReference>
<dbReference type="InterPro" id="IPR000638">
    <property type="entry name" value="Gas-vesicle_GvpA-like"/>
</dbReference>
<dbReference type="InterPro" id="IPR047870">
    <property type="entry name" value="Gas_vesicle_GvpA"/>
</dbReference>
<dbReference type="InterPro" id="IPR050530">
    <property type="entry name" value="GvpA"/>
</dbReference>
<dbReference type="InterPro" id="IPR018493">
    <property type="entry name" value="GvpA-like_CS"/>
</dbReference>
<dbReference type="NCBIfam" id="NF046092">
    <property type="entry name" value="halo_gas_GvpA"/>
    <property type="match status" value="1"/>
</dbReference>
<dbReference type="NCBIfam" id="NF006874">
    <property type="entry name" value="PRK09371.1"/>
    <property type="match status" value="1"/>
</dbReference>
<dbReference type="PANTHER" id="PTHR35344:SF4">
    <property type="entry name" value="GAS VESICLE PROTEIN A1"/>
    <property type="match status" value="1"/>
</dbReference>
<dbReference type="PANTHER" id="PTHR35344">
    <property type="entry name" value="GAS VESICLE STRUCTURAL PROTEIN 2-RELATED"/>
    <property type="match status" value="1"/>
</dbReference>
<dbReference type="Pfam" id="PF00741">
    <property type="entry name" value="Gas_vesicle"/>
    <property type="match status" value="1"/>
</dbReference>
<dbReference type="PROSITE" id="PS00234">
    <property type="entry name" value="GAS_VESICLE_A_1"/>
    <property type="match status" value="1"/>
</dbReference>
<dbReference type="PROSITE" id="PS00669">
    <property type="entry name" value="GAS_VESICLE_A_2"/>
    <property type="match status" value="1"/>
</dbReference>
<protein>
    <recommendedName>
        <fullName evidence="1">Gas vesicle protein A</fullName>
        <shortName evidence="1">GvpA</shortName>
        <shortName evidence="3">nv-GvpA</shortName>
    </recommendedName>
</protein>
<accession>O33397</accession>
<gene>
    <name evidence="1 3" type="primary">gvpA</name>
</gene>
<comment type="function">
    <text evidence="1">Gas vesicles are hollow, gas filled proteinaceous nanostructures found in some microorganisms. During planktonic growth they allow positioning of the organism at a favorable depth for light or nutrient acquisition. GvpA forms the protein shell.</text>
</comment>
<comment type="subunit">
    <text evidence="1">The gas vesicle shell is 2 nm thick and consists of a single layer of this protein. It forms helical ribs nearly perpendicular to the long axis of the vesicle.</text>
</comment>
<comment type="subcellular location">
    <subcellularLocation>
        <location evidence="1 2">Gas vesicle shell</location>
    </subcellularLocation>
    <text evidence="2">The N- and C-terminii are exposed on the surface.</text>
</comment>
<comment type="induction">
    <text evidence="2">Synthesizes gas vesicles at all stages of growth in media containing 15-25% NaCl, but not in 13% NaCl. This gene is highly transcribed in all salt levels tested, excpet for very low expression in stationary phase. Longer transcripts able to cover the whole locus are detected at much lower levels. The protein is expressed in both 13% and 20% NaCl (at protein level).</text>
</comment>
<comment type="miscellaneous">
    <text evidence="2">In this organism gas vesicles are about 200 nm wide and 430 nm long. The organization of genes in the locus is quite different from Halobacterium and Haloferax, being gvpACNO followed on the same strand by gvpFGH; other genes have not been identifed.</text>
</comment>
<comment type="similarity">
    <text evidence="1">Belongs to the gas vesicle GvpA family.</text>
</comment>
<evidence type="ECO:0000255" key="1">
    <source>
        <dbReference type="HAMAP-Rule" id="MF_00576"/>
    </source>
</evidence>
<evidence type="ECO:0000269" key="2">
    <source>
    </source>
</evidence>
<evidence type="ECO:0000303" key="3">
    <source>
    </source>
</evidence>
<reference key="1">
    <citation type="journal article" date="1997" name="Arch. Microbiol.">
        <title>The characterization of the gvpACNOFGH gene cluster involved in gas vesicle synthesis in Natronobacterium vacuolatum.</title>
        <authorList>
            <person name="Mayr A."/>
            <person name="Pfeifer F."/>
        </authorList>
    </citation>
    <scope>NUCLEOTIDE SEQUENCE [GENOMIC DNA]</scope>
    <scope>PROTEIN SEQUENCE OF 2-12 AND 61-74</scope>
    <scope>SUBCELLULAR LOCATION</scope>
    <scope>INDUCTION BY SALT</scope>
</reference>
<name>GVPA_HALVU</name>
<proteinExistence type="evidence at protein level"/>